<accession>P00371</accession>
<accession>A0A287AV04</accession>
<accession>A0A4X1SRS8</accession>
<proteinExistence type="evidence at protein level"/>
<comment type="function">
    <text evidence="2 3 4 7 8 10 11 12 13 14 16 17 19 20">Catalyzes the oxidative deamination of D-amino acids with broad substrate specificity (PubMed:10876160, PubMed:16751595, PubMed:17469229, PubMed:20603179, PubMed:24492954, PubMed:24644036, PubMed:28592826, PubMed:2904274, PubMed:30333894). Required to catabolize D-amino acids synthesized endogenously, of gastrointestinal bacterial origin or obtained from the diet, and to use these as nutrients (By similarity). Regulates the level of D-amino acid neurotransmitters in the brain, such as D-serine, a co-agonist of N-methyl D-aspartate (NMDA) receptors, and may modulate synaptic transmission (By similarity). Catalyzes the first step of the racemization of D-DOPA to L-DOPA, for possible use in an alternative dopamine biosynthesis pathway (By similarity). Also catalyzes the first step of the chiral inversion of N(gamma)-nitro-D-arginine methyl ester (D-NNA) to its L-enantiomer L-NNA that acts as a nitric oxide synthase inhibitor (By similarity). The hydrogen peroxide produced in the reaction provides protection against microbial infection; it contributes to the oxidative killing activity of phagocytic leukocytes and protects against bacterial colonization of the small intestine (PubMed:22271930, PubMed:25425233, PubMed:27670111). Enzyme secreted into the lumen of the intestine may not be catalytically active and could instead be proteolytically cleaved into peptides with antimicrobial activity (By similarity). The hydrogen peroxide produced in the reaction may also play a role in promoting cellular senescence in response to DNA damage (By similarity). Could act as a detoxifying agent which removes D-amino acids accumulated during aging (By similarity).</text>
</comment>
<comment type="catalytic activity">
    <reaction evidence="4 5 6 7 8 10 12 13 17 19 20 22 23 28">
        <text>a D-alpha-amino acid + O2 + H2O = a 2-oxocarboxylate + H2O2 + NH4(+)</text>
        <dbReference type="Rhea" id="RHEA:21816"/>
        <dbReference type="ChEBI" id="CHEBI:15377"/>
        <dbReference type="ChEBI" id="CHEBI:15379"/>
        <dbReference type="ChEBI" id="CHEBI:16240"/>
        <dbReference type="ChEBI" id="CHEBI:28938"/>
        <dbReference type="ChEBI" id="CHEBI:35179"/>
        <dbReference type="ChEBI" id="CHEBI:59871"/>
        <dbReference type="EC" id="1.4.3.3"/>
    </reaction>
    <physiologicalReaction direction="left-to-right" evidence="4 5 6 7 8 10 12 13 17 19 20 22 23 28">
        <dbReference type="Rhea" id="RHEA:21817"/>
    </physiologicalReaction>
</comment>
<comment type="catalytic activity">
    <reaction evidence="5 7 8 10 17 19">
        <text>D-alanine + O2 + H2O = pyruvate + H2O2 + NH4(+)</text>
        <dbReference type="Rhea" id="RHEA:22688"/>
        <dbReference type="ChEBI" id="CHEBI:15361"/>
        <dbReference type="ChEBI" id="CHEBI:15377"/>
        <dbReference type="ChEBI" id="CHEBI:15379"/>
        <dbReference type="ChEBI" id="CHEBI:16240"/>
        <dbReference type="ChEBI" id="CHEBI:28938"/>
        <dbReference type="ChEBI" id="CHEBI:57416"/>
    </reaction>
    <physiologicalReaction direction="left-to-right" evidence="5 7 8 10 17 19">
        <dbReference type="Rhea" id="RHEA:22689"/>
    </physiologicalReaction>
</comment>
<comment type="catalytic activity">
    <reaction evidence="2">
        <text>D-cysteine + O2 + H2O = 2-oxo-3-sulfanylpropanoate + H2O2 + NH4(+)</text>
        <dbReference type="Rhea" id="RHEA:78791"/>
        <dbReference type="ChEBI" id="CHEBI:15377"/>
        <dbReference type="ChEBI" id="CHEBI:15379"/>
        <dbReference type="ChEBI" id="CHEBI:16240"/>
        <dbReference type="ChEBI" id="CHEBI:28938"/>
        <dbReference type="ChEBI" id="CHEBI:35236"/>
        <dbReference type="ChEBI" id="CHEBI:57678"/>
    </reaction>
    <physiologicalReaction direction="left-to-right" evidence="2">
        <dbReference type="Rhea" id="RHEA:78792"/>
    </physiologicalReaction>
</comment>
<comment type="catalytic activity">
    <reaction evidence="2">
        <text>D-dopa + O2 + H2O = 3-(3,4-dihydroxyphenyl)pyruvate + H2O2 + NH4(+)</text>
        <dbReference type="Rhea" id="RHEA:70971"/>
        <dbReference type="ChEBI" id="CHEBI:15377"/>
        <dbReference type="ChEBI" id="CHEBI:15379"/>
        <dbReference type="ChEBI" id="CHEBI:16240"/>
        <dbReference type="ChEBI" id="CHEBI:28938"/>
        <dbReference type="ChEBI" id="CHEBI:29055"/>
        <dbReference type="ChEBI" id="CHEBI:149689"/>
    </reaction>
    <physiologicalReaction direction="left-to-right" evidence="2">
        <dbReference type="Rhea" id="RHEA:70972"/>
    </physiologicalReaction>
</comment>
<comment type="catalytic activity">
    <reaction evidence="17">
        <text>D-leucine + O2 + H2O = 4-methyl-2-oxopentanoate + H2O2 + NH4(+)</text>
        <dbReference type="Rhea" id="RHEA:78211"/>
        <dbReference type="ChEBI" id="CHEBI:15377"/>
        <dbReference type="ChEBI" id="CHEBI:15379"/>
        <dbReference type="ChEBI" id="CHEBI:16240"/>
        <dbReference type="ChEBI" id="CHEBI:17865"/>
        <dbReference type="ChEBI" id="CHEBI:28938"/>
        <dbReference type="ChEBI" id="CHEBI:143079"/>
    </reaction>
    <physiologicalReaction direction="left-to-right" evidence="17">
        <dbReference type="Rhea" id="RHEA:78212"/>
    </physiologicalReaction>
</comment>
<comment type="catalytic activity">
    <reaction evidence="7 17">
        <text>D-lysine + O2 + H2O = 6-amino-2-oxohexanoate + H2O2 + NH4(+)</text>
        <dbReference type="Rhea" id="RHEA:37583"/>
        <dbReference type="ChEBI" id="CHEBI:15377"/>
        <dbReference type="ChEBI" id="CHEBI:15379"/>
        <dbReference type="ChEBI" id="CHEBI:16240"/>
        <dbReference type="ChEBI" id="CHEBI:28938"/>
        <dbReference type="ChEBI" id="CHEBI:32557"/>
        <dbReference type="ChEBI" id="CHEBI:58183"/>
        <dbReference type="EC" id="1.4.3.3"/>
    </reaction>
    <physiologicalReaction direction="left-to-right" evidence="7 17">
        <dbReference type="Rhea" id="RHEA:37584"/>
    </physiologicalReaction>
</comment>
<comment type="catalytic activity">
    <reaction evidence="7 12 17">
        <text>D-methionine + O2 + H2O = 4-methylsulfanyl-2-oxobutanoate + H2O2 + NH4(+)</text>
        <dbReference type="Rhea" id="RHEA:78207"/>
        <dbReference type="ChEBI" id="CHEBI:15377"/>
        <dbReference type="ChEBI" id="CHEBI:15379"/>
        <dbReference type="ChEBI" id="CHEBI:16240"/>
        <dbReference type="ChEBI" id="CHEBI:16723"/>
        <dbReference type="ChEBI" id="CHEBI:28938"/>
        <dbReference type="ChEBI" id="CHEBI:57932"/>
    </reaction>
    <physiologicalReaction direction="left-to-right" evidence="7 12 17">
        <dbReference type="Rhea" id="RHEA:78208"/>
    </physiologicalReaction>
</comment>
<comment type="catalytic activity">
    <reaction evidence="7 13 17">
        <text>D-phenylalanine + O2 + H2O = 3-phenylpyruvate + H2O2 + NH4(+)</text>
        <dbReference type="Rhea" id="RHEA:70963"/>
        <dbReference type="ChEBI" id="CHEBI:15377"/>
        <dbReference type="ChEBI" id="CHEBI:15379"/>
        <dbReference type="ChEBI" id="CHEBI:16240"/>
        <dbReference type="ChEBI" id="CHEBI:18005"/>
        <dbReference type="ChEBI" id="CHEBI:28938"/>
        <dbReference type="ChEBI" id="CHEBI:57981"/>
    </reaction>
    <physiologicalReaction direction="left-to-right" evidence="7 13 17">
        <dbReference type="Rhea" id="RHEA:70964"/>
    </physiologicalReaction>
</comment>
<comment type="catalytic activity">
    <reaction evidence="4 17">
        <text>D-proline + O2 = 1-pyrroline-2-carboxylate + H2O2</text>
        <dbReference type="Rhea" id="RHEA:78259"/>
        <dbReference type="ChEBI" id="CHEBI:15379"/>
        <dbReference type="ChEBI" id="CHEBI:16240"/>
        <dbReference type="ChEBI" id="CHEBI:39785"/>
        <dbReference type="ChEBI" id="CHEBI:57726"/>
    </reaction>
    <physiologicalReaction direction="left-to-right" evidence="4 17">
        <dbReference type="Rhea" id="RHEA:78260"/>
    </physiologicalReaction>
</comment>
<comment type="catalytic activity">
    <reaction evidence="7 17">
        <text>D-serine + O2 + H2O = 3-hydroxypyruvate + H2O2 + NH4(+)</text>
        <dbReference type="Rhea" id="RHEA:70951"/>
        <dbReference type="ChEBI" id="CHEBI:15377"/>
        <dbReference type="ChEBI" id="CHEBI:15379"/>
        <dbReference type="ChEBI" id="CHEBI:16240"/>
        <dbReference type="ChEBI" id="CHEBI:17180"/>
        <dbReference type="ChEBI" id="CHEBI:28938"/>
        <dbReference type="ChEBI" id="CHEBI:35247"/>
    </reaction>
    <physiologicalReaction direction="left-to-right" evidence="7 17">
        <dbReference type="Rhea" id="RHEA:70952"/>
    </physiologicalReaction>
</comment>
<comment type="catalytic activity">
    <reaction evidence="17">
        <text>D-tryptophan + O2 + H2O = indole-3-pyruvate + H2O2 + NH4(+)</text>
        <dbReference type="Rhea" id="RHEA:78247"/>
        <dbReference type="ChEBI" id="CHEBI:15377"/>
        <dbReference type="ChEBI" id="CHEBI:15379"/>
        <dbReference type="ChEBI" id="CHEBI:16240"/>
        <dbReference type="ChEBI" id="CHEBI:17640"/>
        <dbReference type="ChEBI" id="CHEBI:28938"/>
        <dbReference type="ChEBI" id="CHEBI:57719"/>
    </reaction>
    <physiologicalReaction direction="left-to-right" evidence="17">
        <dbReference type="Rhea" id="RHEA:78248"/>
    </physiologicalReaction>
</comment>
<comment type="catalytic activity">
    <reaction evidence="7 17">
        <text>D-valine + O2 + H2O = 3-methyl-2-oxobutanoate + H2O2 + NH4(+)</text>
        <dbReference type="Rhea" id="RHEA:78203"/>
        <dbReference type="ChEBI" id="CHEBI:11851"/>
        <dbReference type="ChEBI" id="CHEBI:15377"/>
        <dbReference type="ChEBI" id="CHEBI:15379"/>
        <dbReference type="ChEBI" id="CHEBI:16240"/>
        <dbReference type="ChEBI" id="CHEBI:28938"/>
        <dbReference type="ChEBI" id="CHEBI:74338"/>
    </reaction>
    <physiologicalReaction direction="left-to-right" evidence="7 17">
        <dbReference type="Rhea" id="RHEA:78204"/>
    </physiologicalReaction>
</comment>
<comment type="cofactor">
    <cofactor evidence="4 10 13 22 24 25 26">
        <name>FAD</name>
        <dbReference type="ChEBI" id="CHEBI:57692"/>
    </cofactor>
</comment>
<comment type="activity regulation">
    <text evidence="5 8 9 10 19">Inhibited by benzoate, sodium benzoate, thiolactomycin, and hydrogen peroxide (PubMed:15058991, PubMed:17469229, PubMed:20603179, PubMed:2904274). Inhibited by 6-chloro-1,2-benzisoxazol-3(2H)-one (CBIO) and benzo[d]isoxazol-3-ol (BIO) (PubMed:18507366). Malonate and meso-tartrate has no effect on activity (PubMed:17469229).</text>
</comment>
<comment type="biophysicochemical properties">
    <kinetics>
        <KM evidence="7">13 mM for D-arginine (at 25 degrees Celsius and at pH 8.3)</KM>
        <KM evidence="7">10 mM for D-lysine (at 25 degrees Celsius and at pH 8.3)</KM>
        <KM evidence="7">0.65 mM for D-methionine (at 25 degrees Celsius and at pH 8.3)</KM>
        <KM evidence="12">0.19 mM for D-methionine (at 30 degrees Celsius and at pH 7.6)</KM>
        <KM evidence="7">1.4 mM for D-phenylalanine (at 25 degrees Celsius and at pH 8.3)</KM>
        <KM evidence="7">0.56 mM for D-proline (at 25 degrees Celsius and at pH 8.3)</KM>
        <KM evidence="17">0.38 mM for D-proline (at 37 degrees Celsius and at pH 7.5)</KM>
        <KM evidence="17">0.33 mM for D-proline (at 37 degrees Celsius and at pH 8)</KM>
        <KM evidence="17">0.85 mM for D-proline (at 37 degrees Celsius and at pH 8.5)</KM>
        <KM evidence="7">0.63 mM for D-valine (at 25 degrees Celsius and at pH 8.3)</KM>
        <KM evidence="7">0.77 mM for D-alanine (at 25 degrees Celsius and at pH 8.3)</KM>
        <KM evidence="19">2.56 mM for D-alanine (at 25 degrees Celsius and at pH 8.3)</KM>
        <KM evidence="5">1.7 mM for D-alanine (at 25 degrees Celsius and at pH 8.5)</KM>
        <KM evidence="17">30.5 mM for D-alanine (at 37 degrees Celsius and at pH 7)</KM>
        <KM evidence="17">38.2 mM for D-alanine (at 37 degrees Celsius and at pH 9.8)</KM>
        <KM evidence="7">3.3 mM for D-serine (at 25 degrees Celsius and at pH 8.3)</KM>
        <KM evidence="5">2.3 mM for cephalosporin C (CPC) (at 25 degrees Celsius and at pH 8.5)</KM>
        <KM evidence="17">252 mM for L-proline (at 37 degrees Celsius and at pH 7.5)</KM>
        <KM evidence="17">20 mM for L-proline (at 37 degrees Celsius and at pH 8)</KM>
        <KM evidence="17">1800 mM for L-proline (at 37 degrees Celsius and at pH 8.5)</KM>
        <KM evidence="17">362 mM for L-alanine (at 37 degrees Celsius and at pH 7)</KM>
        <KM evidence="17">43.11 mM for L-alanine (at 37 degrees Celsius and at pH 9.8)</KM>
        <KM evidence="17">45 mM for L-aspartate (at 37 degrees Celsius and at pH 8)</KM>
        <KM evidence="17">43 mM for D-aspartate (at 37 degrees Celsius and at pH 8)</KM>
        <KM evidence="12">0.09 mM for oxygen (at 30 degrees Celsius and at pH 7.6)</KM>
        <text evidence="5 7 17">kcat is 3.5 sec(-1) with D-arginine as substrate (at 25 degrees Celsius and at pH 8.3) (PubMed:16751595). kcat is 0.8 sec(-1) with D-lysine as substrate (at 25 degrees Celsius and at pH 8.3) (PubMed:16751595). kcat is 6.8 sec(-1) with D-methionine as substrate (at 25 degrees Celsius and at pH 8.3) (PubMed:16751595). kcat is 16.7 sec(-1) with D-phenylalanine as substrate (at 25 degrees Celsius and at pH 8.3) (PubMed:16751595). kcat is 10.3 sec(-1) with D-proline as substrate (at 25 degrees Celsius and at pH 8.3) (PubMed:16751595). kcat is 50.2 sec(-1) with D-proline as substrate (at 37 degrees Celsius and at pH 7.5) (PubMed:28592826). kcat is 107.3 sec(-1) with D-proline as substrate (at 37 degrees Celsius and at pH 8) (PubMed:28592826). kcat is 43.3 sec(-1) with D-proline as substrate (at 37 degrees Celsius and at pH 8.5) (PubMed:28592826). kcat is 2.5 sec(-1) with D-valine as substrate (at 25 degrees Celsius and at pH 8.3) (PubMed:16751595). kcat is 6.5 sec(-1) with D-alanine as substrate (at 25 degrees Celsius and at pH 8.3) (PubMed:16751595). kcat is 7.3 sec(-1) with D-alanine as substrate (at 25 degrees Celsius and at pH 8.5) (PubMed:15058991). kcat is 151.2 sec(-1) with D-alanine as substrate (at 37 degrees Celsius and at pH 7) (PubMed:28592826). kcat is 133.3 sec(-1) with D-alanine as substrate (at 37 degrees Celsius and at pH 9.8) (PubMed:28592826). kcat is 3 sec(-1) with D-serine as substrate (at 25 degrees Celsius and at pH 8.3) (PubMed:16751595). kcat is 0.65 sec(-1) with cephalosporin C (CPC) as substrate (at 25 degrees Celsius and at pH 8.3) (PubMed:15058991). kcat is 0.7 sec(-1) with L-proline as substrate (at 37 degrees Celsius and at pH 7.5) (PubMed:28592826). kcat is 6.71 sec(-1) with L-proline as substrate (at 37 degrees Celsius and at pH 8) (PubMed:28592826). kcat is 0.4 sec(-1) with L-proline as substrate (at 37 degrees Celsius and at pH 8.5) (PubMed:28592826). kcat is 0.09 sec(-1) with L-alanine as substrate (at 37 degrees Celsius and at pH 7) (PubMed:28592826). kcat is 9.4 sec(-1) with L-alanine as substrate (at 37 degrees Celsius and at pH 9.8) (PubMed:28592826). kcat is 0.89 sec(-1) with L-aspartate as substrate (at 37 degrees Celsius and at pH 8) (PubMed:28592826). kcat is 0.95 sec(-1) with D-aspartate as substrate (at 37 degrees Celsius and at pH 8) (PubMed:28592826).</text>
    </kinetics>
    <phDependence>
        <text evidence="5">Optimum pH is around 9-10.</text>
    </phDependence>
</comment>
<comment type="subunit">
    <text evidence="1 24 25 26">Homodimer (PubMed:8755502, PubMed:9153426, PubMed:9399588). Interacts with BSN (via coiled region); the interaction is direct and inhibits DAO enzyme activity (By similarity).</text>
</comment>
<comment type="subcellular location">
    <subcellularLocation>
        <location evidence="21">Peroxisome matrix</location>
    </subcellularLocation>
    <subcellularLocation>
        <location evidence="2">Cytoplasm</location>
        <location evidence="2">Cytosol</location>
    </subcellularLocation>
    <subcellularLocation>
        <location evidence="1">Presynaptic active zone</location>
    </subcellularLocation>
    <subcellularLocation>
        <location evidence="3">Secreted</location>
    </subcellularLocation>
    <text evidence="1 2 3">Transiently present in the cytosol before being delivered to the peroxisomes (By similarity). In the cerebellum, a fraction of protein localizes to the presynaptic active zone, where its activity is regulated by protein BSN (By similarity). Secreted into the lumen of the small intestine (By similarity).</text>
</comment>
<comment type="tissue specificity">
    <text evidence="19">Expressed in the liver and in the kidney, including in epithelial cells (PubMed:2904274). Not expressed in the lung (PubMed:2904274).</text>
</comment>
<comment type="induction">
    <text evidence="21">Repressed in conditions of amino acid starvation in an autophagy-dependent manner.</text>
</comment>
<comment type="PTM">
    <text evidence="2">Phosphorylated in the cerebellum; probably not by PRKACA, PRKCA or PRKCE.</text>
</comment>
<comment type="PTM">
    <text evidence="2">May be S-nitrosylated, which partially inactivates the enzyme.</text>
</comment>
<comment type="miscellaneous">
    <text evidence="17">Variation of pH perturbs the enantioselectivity of the enzyme towards some amino acids.</text>
</comment>
<comment type="similarity">
    <text evidence="27">Belongs to the DAMOX/DASOX family.</text>
</comment>
<gene>
    <name type="primary">DAO</name>
</gene>
<keyword id="KW-0002">3D-structure</keyword>
<keyword id="KW-0966">Cell projection</keyword>
<keyword id="KW-0963">Cytoplasm</keyword>
<keyword id="KW-0903">Direct protein sequencing</keyword>
<keyword id="KW-0274">FAD</keyword>
<keyword id="KW-0285">Flavoprotein</keyword>
<keyword id="KW-0560">Oxidoreductase</keyword>
<keyword id="KW-0576">Peroxisome</keyword>
<keyword id="KW-0597">Phosphoprotein</keyword>
<keyword id="KW-1185">Reference proteome</keyword>
<keyword id="KW-0702">S-nitrosylation</keyword>
<keyword id="KW-0964">Secreted</keyword>
<keyword id="KW-0770">Synapse</keyword>
<name>OXDA_PIG</name>
<evidence type="ECO:0000250" key="1">
    <source>
        <dbReference type="UniProtKB" id="O35078"/>
    </source>
</evidence>
<evidence type="ECO:0000250" key="2">
    <source>
        <dbReference type="UniProtKB" id="P14920"/>
    </source>
</evidence>
<evidence type="ECO:0000250" key="3">
    <source>
        <dbReference type="UniProtKB" id="P18894"/>
    </source>
</evidence>
<evidence type="ECO:0000269" key="4">
    <source>
    </source>
</evidence>
<evidence type="ECO:0000269" key="5">
    <source>
    </source>
</evidence>
<evidence type="ECO:0000269" key="6">
    <source>
    </source>
</evidence>
<evidence type="ECO:0000269" key="7">
    <source>
    </source>
</evidence>
<evidence type="ECO:0000269" key="8">
    <source>
    </source>
</evidence>
<evidence type="ECO:0000269" key="9">
    <source>
    </source>
</evidence>
<evidence type="ECO:0000269" key="10">
    <source>
    </source>
</evidence>
<evidence type="ECO:0000269" key="11">
    <source>
    </source>
</evidence>
<evidence type="ECO:0000269" key="12">
    <source>
    </source>
</evidence>
<evidence type="ECO:0000269" key="13">
    <source>
    </source>
</evidence>
<evidence type="ECO:0000269" key="14">
    <source>
    </source>
</evidence>
<evidence type="ECO:0000269" key="15">
    <source>
    </source>
</evidence>
<evidence type="ECO:0000269" key="16">
    <source>
    </source>
</evidence>
<evidence type="ECO:0000269" key="17">
    <source>
    </source>
</evidence>
<evidence type="ECO:0000269" key="18">
    <source>
    </source>
</evidence>
<evidence type="ECO:0000269" key="19">
    <source>
    </source>
</evidence>
<evidence type="ECO:0000269" key="20">
    <source>
    </source>
</evidence>
<evidence type="ECO:0000269" key="21">
    <source>
    </source>
</evidence>
<evidence type="ECO:0000269" key="22">
    <source>
    </source>
</evidence>
<evidence type="ECO:0000269" key="23">
    <source>
    </source>
</evidence>
<evidence type="ECO:0000269" key="24">
    <source>
    </source>
</evidence>
<evidence type="ECO:0000269" key="25">
    <source>
    </source>
</evidence>
<evidence type="ECO:0000269" key="26">
    <source>
    </source>
</evidence>
<evidence type="ECO:0000305" key="27"/>
<evidence type="ECO:0000305" key="28">
    <source>
    </source>
</evidence>
<evidence type="ECO:0000305" key="29">
    <source>
    </source>
</evidence>
<evidence type="ECO:0000305" key="30">
    <source>
    </source>
</evidence>
<evidence type="ECO:0000312" key="31">
    <source>
        <dbReference type="Proteomes" id="UP000008227"/>
    </source>
</evidence>
<evidence type="ECO:0007744" key="32">
    <source>
        <dbReference type="PDB" id="1AN9"/>
    </source>
</evidence>
<evidence type="ECO:0007744" key="33">
    <source>
        <dbReference type="PDB" id="1DAO"/>
    </source>
</evidence>
<evidence type="ECO:0007744" key="34">
    <source>
        <dbReference type="PDB" id="1DDO"/>
    </source>
</evidence>
<evidence type="ECO:0007744" key="35">
    <source>
        <dbReference type="PDB" id="1EVI"/>
    </source>
</evidence>
<evidence type="ECO:0007744" key="36">
    <source>
        <dbReference type="PDB" id="1KIF"/>
    </source>
</evidence>
<evidence type="ECO:0007744" key="37">
    <source>
        <dbReference type="PDB" id="1VE9"/>
    </source>
</evidence>
<evidence type="ECO:0007744" key="38">
    <source>
        <dbReference type="PDB" id="3WGT"/>
    </source>
</evidence>
<evidence type="ECO:0007744" key="39">
    <source>
        <dbReference type="PDB" id="4YJD"/>
    </source>
</evidence>
<evidence type="ECO:0007744" key="40">
    <source>
        <dbReference type="PDB" id="4YJF"/>
    </source>
</evidence>
<evidence type="ECO:0007744" key="41">
    <source>
        <dbReference type="PDB" id="4YJG"/>
    </source>
</evidence>
<evidence type="ECO:0007744" key="42">
    <source>
        <dbReference type="PDB" id="4YJH"/>
    </source>
</evidence>
<evidence type="ECO:0007744" key="43">
    <source>
        <dbReference type="PDB" id="5WWV"/>
    </source>
</evidence>
<evidence type="ECO:0007744" key="44">
    <source>
        <dbReference type="PDB" id="5WX2"/>
    </source>
</evidence>
<evidence type="ECO:0007829" key="45">
    <source>
        <dbReference type="PDB" id="1AN9"/>
    </source>
</evidence>
<evidence type="ECO:0007829" key="46">
    <source>
        <dbReference type="PDB" id="1DDO"/>
    </source>
</evidence>
<evidence type="ECO:0007829" key="47">
    <source>
        <dbReference type="PDB" id="3WGT"/>
    </source>
</evidence>
<evidence type="ECO:0007829" key="48">
    <source>
        <dbReference type="PDB" id="4YJF"/>
    </source>
</evidence>
<protein>
    <recommendedName>
        <fullName>D-amino-acid oxidase</fullName>
        <shortName>DAAO</shortName>
        <shortName>DAMOX</shortName>
        <shortName>DAO</shortName>
        <ecNumber evidence="5 6 7 8 10 19 22 23">1.4.3.3</ecNumber>
    </recommendedName>
</protein>
<organism>
    <name type="scientific">Sus scrofa</name>
    <name type="common">Pig</name>
    <dbReference type="NCBI Taxonomy" id="9823"/>
    <lineage>
        <taxon>Eukaryota</taxon>
        <taxon>Metazoa</taxon>
        <taxon>Chordata</taxon>
        <taxon>Craniata</taxon>
        <taxon>Vertebrata</taxon>
        <taxon>Euteleostomi</taxon>
        <taxon>Mammalia</taxon>
        <taxon>Eutheria</taxon>
        <taxon>Laurasiatheria</taxon>
        <taxon>Artiodactyla</taxon>
        <taxon>Suina</taxon>
        <taxon>Suidae</taxon>
        <taxon>Sus</taxon>
    </lineage>
</organism>
<feature type="chain" id="PRO_0000162763" description="D-amino-acid oxidase">
    <location>
        <begin position="1"/>
        <end position="347"/>
    </location>
</feature>
<feature type="region of interest" description="Required for protein stability" evidence="2">
    <location>
        <begin position="1"/>
        <end position="16"/>
    </location>
</feature>
<feature type="region of interest" description="Active site lid that may open upon substrate/product migration in and out of the active site and close to increase the hydrophobicity of the active site, to make the hydride transfer reaction more efficient" evidence="25">
    <location>
        <begin position="216"/>
        <end position="228"/>
    </location>
</feature>
<feature type="short sequence motif" description="Microbody targeting signal">
    <location>
        <begin position="345"/>
        <end position="347"/>
    </location>
</feature>
<feature type="binding site" evidence="4 13 15 20 24 25 26 32 34 35 36 37 38 39 40 41 42 43 44">
    <location>
        <position position="8"/>
    </location>
    <ligand>
        <name>FAD</name>
        <dbReference type="ChEBI" id="CHEBI:57692"/>
    </ligand>
</feature>
<feature type="binding site" evidence="2">
    <location>
        <position position="9"/>
    </location>
    <ligand>
        <name>FAD</name>
        <dbReference type="ChEBI" id="CHEBI:57692"/>
    </ligand>
</feature>
<feature type="binding site" evidence="15 42">
    <location>
        <position position="10"/>
    </location>
    <ligand>
        <name>FAD</name>
        <dbReference type="ChEBI" id="CHEBI:57692"/>
    </ligand>
</feature>
<feature type="binding site" evidence="4 13 15 20 24 26 32 35 36 38 39 40 41 42 44">
    <location>
        <position position="11"/>
    </location>
    <ligand>
        <name>FAD</name>
        <dbReference type="ChEBI" id="CHEBI:57692"/>
    </ligand>
</feature>
<feature type="binding site" evidence="4 13 15 20 24 25 26 32 34 35 36 37 38 39 40 41 42 43 44">
    <location>
        <position position="37"/>
    </location>
    <ligand>
        <name>FAD</name>
        <dbReference type="ChEBI" id="CHEBI:57692"/>
    </ligand>
</feature>
<feature type="binding site" evidence="4 13 15 20 25 26 32 34 35 36 37 38 39 40 41 42 43 44">
    <location>
        <position position="38"/>
    </location>
    <ligand>
        <name>FAD</name>
        <dbReference type="ChEBI" id="CHEBI:57692"/>
    </ligand>
</feature>
<feature type="binding site" evidence="2">
    <location>
        <position position="43"/>
    </location>
    <ligand>
        <name>FAD</name>
        <dbReference type="ChEBI" id="CHEBI:57692"/>
    </ligand>
</feature>
<feature type="binding site" evidence="4 13 15 20 24 25 26 32 34 35 36 37 38 39 40 41 43">
    <location>
        <position position="44"/>
    </location>
    <ligand>
        <name>FAD</name>
        <dbReference type="ChEBI" id="CHEBI:57692"/>
    </ligand>
</feature>
<feature type="binding site" evidence="4 13 15 20 24 25 26 32 34 35 36 37 38 39 40 41 42 43 44">
    <location>
        <position position="45"/>
    </location>
    <ligand>
        <name>FAD</name>
        <dbReference type="ChEBI" id="CHEBI:57692"/>
    </ligand>
</feature>
<feature type="binding site" evidence="4 13 15 24 26 32 35 36 37 38 39 40 41 42">
    <location>
        <position position="49"/>
    </location>
    <ligand>
        <name>FAD</name>
        <dbReference type="ChEBI" id="CHEBI:57692"/>
    </ligand>
</feature>
<feature type="binding site" evidence="4 13 15 20 24 25 26 32 34 35 36 37 38 39 40 41 42 43">
    <location>
        <position position="50"/>
    </location>
    <ligand>
        <name>FAD</name>
        <dbReference type="ChEBI" id="CHEBI:57692"/>
    </ligand>
</feature>
<feature type="binding site" evidence="4 13 15 20 24 25 26 32 34 35 36 37 38 39 40 41 42 43 44">
    <location>
        <position position="51"/>
    </location>
    <ligand>
        <name>FAD</name>
        <dbReference type="ChEBI" id="CHEBI:57692"/>
    </ligand>
</feature>
<feature type="binding site" evidence="2">
    <location>
        <position position="53"/>
    </location>
    <ligand>
        <name>D-dopa</name>
        <dbReference type="ChEBI" id="CHEBI:149689"/>
    </ligand>
</feature>
<feature type="binding site" evidence="4 35">
    <location>
        <position position="163"/>
    </location>
    <ligand>
        <name>FAD</name>
        <dbReference type="ChEBI" id="CHEBI:57692"/>
    </ligand>
</feature>
<feature type="binding site" evidence="4 13 15 20 24 25 26 32 34 35 36 37 38 39 40 41 42 43 44">
    <location>
        <position position="164"/>
    </location>
    <ligand>
        <name>FAD</name>
        <dbReference type="ChEBI" id="CHEBI:57692"/>
    </ligand>
</feature>
<feature type="binding site" evidence="2">
    <location>
        <position position="182"/>
    </location>
    <ligand>
        <name>FAD</name>
        <dbReference type="ChEBI" id="CHEBI:57692"/>
    </ligand>
</feature>
<feature type="binding site" evidence="30 32">
    <location>
        <position position="224"/>
    </location>
    <ligand>
        <name>D-serine</name>
        <dbReference type="ChEBI" id="CHEBI:35247"/>
    </ligand>
</feature>
<feature type="binding site" evidence="4 35">
    <location>
        <position position="228"/>
    </location>
    <ligand>
        <name>D-proline</name>
        <dbReference type="ChEBI" id="CHEBI:57726"/>
    </ligand>
</feature>
<feature type="binding site" evidence="30 32">
    <location>
        <position position="228"/>
    </location>
    <ligand>
        <name>D-serine</name>
        <dbReference type="ChEBI" id="CHEBI:35247"/>
    </ligand>
</feature>
<feature type="binding site" evidence="2">
    <location>
        <position position="283"/>
    </location>
    <ligand>
        <name>D-dopa</name>
        <dbReference type="ChEBI" id="CHEBI:149689"/>
    </ligand>
</feature>
<feature type="binding site" evidence="4 35">
    <location>
        <position position="283"/>
    </location>
    <ligand>
        <name>D-proline</name>
        <dbReference type="ChEBI" id="CHEBI:57726"/>
    </ligand>
</feature>
<feature type="binding site" evidence="30 32">
    <location>
        <position position="283"/>
    </location>
    <ligand>
        <name>D-serine</name>
        <dbReference type="ChEBI" id="CHEBI:35247"/>
    </ligand>
</feature>
<feature type="binding site" evidence="2">
    <location>
        <position position="283"/>
    </location>
    <ligand>
        <name>FAD</name>
        <dbReference type="ChEBI" id="CHEBI:57692"/>
    </ligand>
</feature>
<feature type="binding site" evidence="4 13 15 20 24 25 26 32 34 35 36 37 38 39 40 41 42 43 44">
    <location>
        <position position="312"/>
    </location>
    <ligand>
        <name>FAD</name>
        <dbReference type="ChEBI" id="CHEBI:57692"/>
    </ligand>
</feature>
<feature type="binding site" evidence="2">
    <location>
        <position position="313"/>
    </location>
    <ligand>
        <name>D-dopa</name>
        <dbReference type="ChEBI" id="CHEBI:149689"/>
    </ligand>
</feature>
<feature type="binding site" evidence="4 35">
    <location>
        <position position="313"/>
    </location>
    <ligand>
        <name>D-proline</name>
        <dbReference type="ChEBI" id="CHEBI:57726"/>
    </ligand>
</feature>
<feature type="binding site" evidence="29 30 32">
    <location>
        <position position="313"/>
    </location>
    <ligand>
        <name>D-serine</name>
        <dbReference type="ChEBI" id="CHEBI:35247"/>
    </ligand>
</feature>
<feature type="binding site" evidence="4 13 15 25 34 35 38 39 40 41 42">
    <location>
        <position position="313"/>
    </location>
    <ligand>
        <name>FAD</name>
        <dbReference type="ChEBI" id="CHEBI:57692"/>
    </ligand>
</feature>
<feature type="binding site" evidence="4 13 15 20 24 25 26 32 34 35 36 37 38 39 40 41 42 43 44">
    <location>
        <position position="315"/>
    </location>
    <ligand>
        <name>FAD</name>
        <dbReference type="ChEBI" id="CHEBI:57692"/>
    </ligand>
</feature>
<feature type="binding site" evidence="4 13 15 20 24 25 26 32 34 35 36 37 38 39 40 41 42 44">
    <location>
        <position position="316"/>
    </location>
    <ligand>
        <name>FAD</name>
        <dbReference type="ChEBI" id="CHEBI:57692"/>
    </ligand>
</feature>
<feature type="binding site" evidence="4 13 15 20 24 25 26 32 34 35 36 37 38 39 40 41 42 43 44">
    <location>
        <position position="317"/>
    </location>
    <ligand>
        <name>FAD</name>
        <dbReference type="ChEBI" id="CHEBI:57692"/>
    </ligand>
</feature>
<feature type="mutagenesis site" description="No effect." evidence="18">
    <original>Y</original>
    <variation>F</variation>
    <location>
        <position position="55"/>
    </location>
</feature>
<feature type="mutagenesis site" description="No effect." evidence="18">
    <original>M</original>
    <variation>L</variation>
    <location>
        <position position="110"/>
    </location>
</feature>
<feature type="mutagenesis site" description="Alters substrate specificity; capable of oxidizing D-aspartate and decreases activity on D-alanine and D-arginine." evidence="7">
    <original>ITHDLERGIYN</original>
    <variation>RDGSG</variation>
    <location>
        <begin position="215"/>
        <end position="225"/>
    </location>
</feature>
<feature type="mutagenesis site" description="No effect." evidence="18">
    <original>H</original>
    <variation>L</variation>
    <location>
        <position position="217"/>
    </location>
</feature>
<feature type="mutagenesis site" description="Increases activity on D-arginine and D-phenylalanine, and decreases activity on D-alanine, D-serine, D-proline, and D-valine." evidence="7">
    <original>ERGIY</original>
    <variation>DRGIG</variation>
    <location>
        <begin position="220"/>
        <end position="224"/>
    </location>
</feature>
<feature type="mutagenesis site" description="Increases activity on D-arginine, and decreases activity on D-alanine, D-serine, D-proline, and D-valine." evidence="7">
    <original>RGIY</original>
    <variation>DGIG</variation>
    <location>
        <begin position="221"/>
        <end position="224"/>
    </location>
</feature>
<feature type="mutagenesis site" description="Increases activity on D-arginine, and decreases activity on D-alanine, D-serine, D-proline, and D-valine." evidence="7">
    <original>GIY</original>
    <variation>DIG</variation>
    <location>
        <begin position="222"/>
        <end position="224"/>
    </location>
</feature>
<feature type="mutagenesis site" description="Decreases activity on D-alanine, D-serine, D-proline, and D-valine." evidence="7">
    <original>IY</original>
    <variation>DG</variation>
    <location>
        <begin position="223"/>
        <end position="224"/>
    </location>
</feature>
<feature type="mutagenesis site" description="Decreases activity on D-alanine, D-serine, D-proline, and D-valine." evidence="7">
    <original>Y</original>
    <variation>G</variation>
    <location>
        <position position="224"/>
    </location>
</feature>
<feature type="mutagenesis site" description="Reduces activity." evidence="6">
    <original>Y</original>
    <variation>F</variation>
    <location>
        <position position="228"/>
    </location>
</feature>
<feature type="mutagenesis site" description="Abolishes D-amino acid oxidase activity. Gains amine oxidase activity; when associated with G-283." evidence="13 15 20">
    <original>Y</original>
    <variation>L</variation>
    <location>
        <position position="228"/>
    </location>
</feature>
<feature type="mutagenesis site" description="Alters substrate specificity; when associated with G-283." evidence="20">
    <original>I</original>
    <variation>A</variation>
    <variation>C</variation>
    <variation>F</variation>
    <location>
        <position position="230"/>
    </location>
</feature>
<feature type="mutagenesis site" description="Abolishes D-amino acid oxidase activity." evidence="13">
    <original>R</original>
    <variation>G</variation>
    <variation>A</variation>
    <variation>C</variation>
    <location>
        <position position="283"/>
    </location>
</feature>
<feature type="mutagenesis site" description="Alters substrate specificity; when associated with A-230; C-230 or F-230. Gains amine oxidase activity; when associated with L-228." evidence="13 15 20">
    <original>R</original>
    <variation>G</variation>
    <location>
        <position position="283"/>
    </location>
</feature>
<feature type="mutagenesis site" description="Reduces activity." evidence="6">
    <original>H</original>
    <variation>L</variation>
    <location>
        <position position="307"/>
    </location>
</feature>
<feature type="strand" evidence="47">
    <location>
        <begin position="2"/>
        <end position="6"/>
    </location>
</feature>
<feature type="helix" evidence="47">
    <location>
        <begin position="10"/>
        <end position="23"/>
    </location>
</feature>
<feature type="turn" evidence="47">
    <location>
        <begin position="24"/>
        <end position="26"/>
    </location>
</feature>
<feature type="strand" evidence="45">
    <location>
        <begin position="27"/>
        <end position="29"/>
    </location>
</feature>
<feature type="strand" evidence="47">
    <location>
        <begin position="31"/>
        <end position="37"/>
    </location>
</feature>
<feature type="helix" evidence="45">
    <location>
        <begin position="40"/>
        <end position="42"/>
    </location>
</feature>
<feature type="helix" evidence="47">
    <location>
        <begin position="44"/>
        <end position="47"/>
    </location>
</feature>
<feature type="helix" evidence="47">
    <location>
        <begin position="63"/>
        <end position="77"/>
    </location>
</feature>
<feature type="turn" evidence="47">
    <location>
        <begin position="78"/>
        <end position="80"/>
    </location>
</feature>
<feature type="turn" evidence="47">
    <location>
        <begin position="82"/>
        <end position="84"/>
    </location>
</feature>
<feature type="helix" evidence="47">
    <location>
        <begin position="85"/>
        <end position="87"/>
    </location>
</feature>
<feature type="strand" evidence="47">
    <location>
        <begin position="89"/>
        <end position="100"/>
    </location>
</feature>
<feature type="turn" evidence="47">
    <location>
        <begin position="106"/>
        <end position="110"/>
    </location>
</feature>
<feature type="strand" evidence="47">
    <location>
        <begin position="111"/>
        <end position="116"/>
    </location>
</feature>
<feature type="helix" evidence="47">
    <location>
        <begin position="119"/>
        <end position="122"/>
    </location>
</feature>
<feature type="strand" evidence="46">
    <location>
        <begin position="125"/>
        <end position="127"/>
    </location>
</feature>
<feature type="strand" evidence="47">
    <location>
        <begin position="129"/>
        <end position="139"/>
    </location>
</feature>
<feature type="helix" evidence="47">
    <location>
        <begin position="141"/>
        <end position="154"/>
    </location>
</feature>
<feature type="strand" evidence="47">
    <location>
        <begin position="158"/>
        <end position="161"/>
    </location>
</feature>
<feature type="helix" evidence="47">
    <location>
        <begin position="167"/>
        <end position="172"/>
    </location>
</feature>
<feature type="strand" evidence="47">
    <location>
        <begin position="176"/>
        <end position="180"/>
    </location>
</feature>
<feature type="helix" evidence="47">
    <location>
        <begin position="183"/>
        <end position="188"/>
    </location>
</feature>
<feature type="strand" evidence="47">
    <location>
        <begin position="196"/>
        <end position="206"/>
    </location>
</feature>
<feature type="strand" evidence="47">
    <location>
        <begin position="212"/>
        <end position="216"/>
    </location>
</feature>
<feature type="turn" evidence="47">
    <location>
        <begin position="219"/>
        <end position="221"/>
    </location>
</feature>
<feature type="turn" evidence="46">
    <location>
        <begin position="222"/>
        <end position="224"/>
    </location>
</feature>
<feature type="strand" evidence="47">
    <location>
        <begin position="228"/>
        <end position="231"/>
    </location>
</feature>
<feature type="strand" evidence="47">
    <location>
        <begin position="233"/>
        <end position="239"/>
    </location>
</feature>
<feature type="helix" evidence="47">
    <location>
        <begin position="253"/>
        <end position="266"/>
    </location>
</feature>
<feature type="helix" evidence="47">
    <location>
        <begin position="268"/>
        <end position="272"/>
    </location>
</feature>
<feature type="strand" evidence="47">
    <location>
        <begin position="274"/>
        <end position="285"/>
    </location>
</feature>
<feature type="strand" evidence="47">
    <location>
        <begin position="290"/>
        <end position="298"/>
    </location>
</feature>
<feature type="strand" evidence="47">
    <location>
        <begin position="301"/>
        <end position="309"/>
    </location>
</feature>
<feature type="helix" evidence="48">
    <location>
        <begin position="312"/>
        <end position="314"/>
    </location>
</feature>
<feature type="helix" evidence="47">
    <location>
        <begin position="315"/>
        <end position="336"/>
    </location>
</feature>
<dbReference type="EC" id="1.4.3.3" evidence="5 6 7 8 10 19 22 23"/>
<dbReference type="EMBL" id="M16972">
    <property type="protein sequence ID" value="AAA30985.1"/>
    <property type="molecule type" value="mRNA"/>
</dbReference>
<dbReference type="EMBL" id="M18447">
    <property type="protein sequence ID" value="AAA31025.1"/>
    <property type="molecule type" value="Genomic_DNA"/>
</dbReference>
<dbReference type="EMBL" id="M18444">
    <property type="protein sequence ID" value="AAA31025.1"/>
    <property type="status" value="JOINED"/>
    <property type="molecule type" value="Genomic_DNA"/>
</dbReference>
<dbReference type="EMBL" id="M18445">
    <property type="protein sequence ID" value="AAA31025.1"/>
    <property type="status" value="JOINED"/>
    <property type="molecule type" value="Genomic_DNA"/>
</dbReference>
<dbReference type="EMBL" id="M18446">
    <property type="protein sequence ID" value="AAA31025.1"/>
    <property type="status" value="JOINED"/>
    <property type="molecule type" value="Genomic_DNA"/>
</dbReference>
<dbReference type="EMBL" id="M18448">
    <property type="protein sequence ID" value="AAA31026.1"/>
    <property type="molecule type" value="mRNA"/>
</dbReference>
<dbReference type="PIR" id="A29598">
    <property type="entry name" value="OXPGDA"/>
</dbReference>
<dbReference type="PIR" id="A33798">
    <property type="entry name" value="A33798"/>
</dbReference>
<dbReference type="RefSeq" id="NP_999231.1">
    <property type="nucleotide sequence ID" value="NM_214066.2"/>
</dbReference>
<dbReference type="PDB" id="1AN9">
    <property type="method" value="X-ray"/>
    <property type="resolution" value="2.50 A"/>
    <property type="chains" value="A/B=1-340"/>
</dbReference>
<dbReference type="PDB" id="1DAO">
    <property type="method" value="X-ray"/>
    <property type="resolution" value="3.20 A"/>
    <property type="chains" value="A/B/C/D/E/F/G/H=1-347"/>
</dbReference>
<dbReference type="PDB" id="1DDO">
    <property type="method" value="X-ray"/>
    <property type="resolution" value="3.10 A"/>
    <property type="chains" value="A/B/C/D/E/F/G/H=1-347"/>
</dbReference>
<dbReference type="PDB" id="1EVI">
    <property type="method" value="X-ray"/>
    <property type="resolution" value="2.50 A"/>
    <property type="chains" value="A/B=1-340"/>
</dbReference>
<dbReference type="PDB" id="1KIF">
    <property type="method" value="X-ray"/>
    <property type="resolution" value="2.60 A"/>
    <property type="chains" value="A/B/C/D/E/F/G/H=1-347"/>
</dbReference>
<dbReference type="PDB" id="1VE9">
    <property type="method" value="X-ray"/>
    <property type="resolution" value="2.50 A"/>
    <property type="chains" value="A/B=1-347"/>
</dbReference>
<dbReference type="PDB" id="3WGT">
    <property type="method" value="X-ray"/>
    <property type="resolution" value="1.88 A"/>
    <property type="chains" value="A/B=1-347"/>
</dbReference>
<dbReference type="PDB" id="4YJD">
    <property type="method" value="X-ray"/>
    <property type="resolution" value="2.30 A"/>
    <property type="chains" value="A/B=1-340"/>
</dbReference>
<dbReference type="PDB" id="4YJF">
    <property type="method" value="X-ray"/>
    <property type="resolution" value="2.20 A"/>
    <property type="chains" value="A=1-341, B=1-339"/>
</dbReference>
<dbReference type="PDB" id="4YJG">
    <property type="method" value="X-ray"/>
    <property type="resolution" value="2.50 A"/>
    <property type="chains" value="A=1-341, B=1-340"/>
</dbReference>
<dbReference type="PDB" id="4YJH">
    <property type="method" value="X-ray"/>
    <property type="resolution" value="2.70 A"/>
    <property type="chains" value="A/B=1-340"/>
</dbReference>
<dbReference type="PDB" id="5WWV">
    <property type="method" value="X-ray"/>
    <property type="resolution" value="3.20 A"/>
    <property type="chains" value="A/B/C/D/E/F/G/H=1-347"/>
</dbReference>
<dbReference type="PDB" id="5WX2">
    <property type="method" value="X-ray"/>
    <property type="resolution" value="3.00 A"/>
    <property type="chains" value="A/B/C/D/E/F/G/H=1-347"/>
</dbReference>
<dbReference type="PDBsum" id="1AN9"/>
<dbReference type="PDBsum" id="1DAO"/>
<dbReference type="PDBsum" id="1DDO"/>
<dbReference type="PDBsum" id="1EVI"/>
<dbReference type="PDBsum" id="1KIF"/>
<dbReference type="PDBsum" id="1VE9"/>
<dbReference type="PDBsum" id="3WGT"/>
<dbReference type="PDBsum" id="4YJD"/>
<dbReference type="PDBsum" id="4YJF"/>
<dbReference type="PDBsum" id="4YJG"/>
<dbReference type="PDBsum" id="4YJH"/>
<dbReference type="PDBsum" id="5WWV"/>
<dbReference type="PDBsum" id="5WX2"/>
<dbReference type="SMR" id="P00371"/>
<dbReference type="BioGRID" id="1149269">
    <property type="interactions" value="1"/>
</dbReference>
<dbReference type="FunCoup" id="P00371">
    <property type="interactions" value="332"/>
</dbReference>
<dbReference type="STRING" id="9823.ENSSSCP00000037253"/>
<dbReference type="BindingDB" id="P00371"/>
<dbReference type="ChEMBL" id="CHEMBL6172"/>
<dbReference type="DrugCentral" id="P00371"/>
<dbReference type="PaxDb" id="9823-ENSSSCP00000010609"/>
<dbReference type="PeptideAtlas" id="P00371"/>
<dbReference type="Ensembl" id="ENSSSCT00015010951.1">
    <property type="protein sequence ID" value="ENSSSCP00015004305.1"/>
    <property type="gene ID" value="ENSSSCG00015008169.1"/>
</dbReference>
<dbReference type="Ensembl" id="ENSSSCT00070005965.1">
    <property type="protein sequence ID" value="ENSSSCP00070004870.1"/>
    <property type="gene ID" value="ENSSSCG00070003140.1"/>
</dbReference>
<dbReference type="Ensembl" id="ENSSSCT00090033320">
    <property type="protein sequence ID" value="ENSSSCP00090020748"/>
    <property type="gene ID" value="ENSSSCG00090018852"/>
</dbReference>
<dbReference type="Ensembl" id="ENSSSCT00110077172">
    <property type="protein sequence ID" value="ENSSSCP00110054559"/>
    <property type="gene ID" value="ENSSSCG00110040378"/>
</dbReference>
<dbReference type="Ensembl" id="ENSSSCT00115008799">
    <property type="protein sequence ID" value="ENSSSCP00115008270"/>
    <property type="gene ID" value="ENSSSCG00115005106"/>
</dbReference>
<dbReference type="Ensembl" id="ENSSSCT00130059638">
    <property type="protein sequence ID" value="ENSSSCP00130042753"/>
    <property type="gene ID" value="ENSSSCG00130030540"/>
</dbReference>
<dbReference type="GeneID" id="397134"/>
<dbReference type="KEGG" id="ssc:397134"/>
<dbReference type="CTD" id="1610"/>
<dbReference type="eggNOG" id="KOG3923">
    <property type="taxonomic scope" value="Eukaryota"/>
</dbReference>
<dbReference type="HOGENOM" id="CLU_034311_0_1_1"/>
<dbReference type="InParanoid" id="P00371"/>
<dbReference type="OMA" id="LWWPYRI"/>
<dbReference type="OrthoDB" id="2015447at2759"/>
<dbReference type="TreeFam" id="TF313887"/>
<dbReference type="BRENDA" id="1.4.3.3">
    <property type="organism ID" value="6170"/>
</dbReference>
<dbReference type="Reactome" id="R-SSC-389661">
    <property type="pathway name" value="Glyoxylate metabolism and glycine degradation"/>
</dbReference>
<dbReference type="Reactome" id="R-SSC-9033241">
    <property type="pathway name" value="Peroxisomal protein import"/>
</dbReference>
<dbReference type="SABIO-RK" id="P00371"/>
<dbReference type="STRENDA-DB" id="TEWULR">
    <property type="experiment" value="Kinetics of oxidative deamination of D-methionine (2)"/>
</dbReference>
<dbReference type="STRENDA-DB" id="TOI0T2">
    <property type="experiment" value="Steady state kinetics of Y288L/R283G DAAO"/>
</dbReference>
<dbReference type="EvolutionaryTrace" id="P00371"/>
<dbReference type="PRO" id="PR:P00371"/>
<dbReference type="Proteomes" id="UP000008227">
    <property type="component" value="Unplaced"/>
</dbReference>
<dbReference type="Proteomes" id="UP000314985">
    <property type="component" value="Chromosome 14"/>
</dbReference>
<dbReference type="Proteomes" id="UP000694570">
    <property type="component" value="Unplaced"/>
</dbReference>
<dbReference type="Proteomes" id="UP000694571">
    <property type="component" value="Unplaced"/>
</dbReference>
<dbReference type="Proteomes" id="UP000694720">
    <property type="component" value="Unplaced"/>
</dbReference>
<dbReference type="Proteomes" id="UP000694722">
    <property type="component" value="Unplaced"/>
</dbReference>
<dbReference type="Proteomes" id="UP000694723">
    <property type="component" value="Unplaced"/>
</dbReference>
<dbReference type="Proteomes" id="UP000694724">
    <property type="component" value="Unplaced"/>
</dbReference>
<dbReference type="Proteomes" id="UP000694725">
    <property type="component" value="Unplaced"/>
</dbReference>
<dbReference type="Proteomes" id="UP000694726">
    <property type="component" value="Unplaced"/>
</dbReference>
<dbReference type="Proteomes" id="UP000694727">
    <property type="component" value="Unplaced"/>
</dbReference>
<dbReference type="Proteomes" id="UP000694728">
    <property type="component" value="Unplaced"/>
</dbReference>
<dbReference type="Bgee" id="ENSSSCG00000009942">
    <property type="expression patterns" value="Expressed in adult mammalian kidney and 26 other cell types or tissues"/>
</dbReference>
<dbReference type="GO" id="GO:0042995">
    <property type="term" value="C:cell projection"/>
    <property type="evidence" value="ECO:0007669"/>
    <property type="project" value="UniProtKB-KW"/>
</dbReference>
<dbReference type="GO" id="GO:0005737">
    <property type="term" value="C:cytoplasm"/>
    <property type="evidence" value="ECO:0000318"/>
    <property type="project" value="GO_Central"/>
</dbReference>
<dbReference type="GO" id="GO:0005829">
    <property type="term" value="C:cytosol"/>
    <property type="evidence" value="ECO:0007669"/>
    <property type="project" value="UniProtKB-SubCell"/>
</dbReference>
<dbReference type="GO" id="GO:0005576">
    <property type="term" value="C:extracellular region"/>
    <property type="evidence" value="ECO:0007669"/>
    <property type="project" value="UniProtKB-SubCell"/>
</dbReference>
<dbReference type="GO" id="GO:0005782">
    <property type="term" value="C:peroxisomal matrix"/>
    <property type="evidence" value="ECO:0000314"/>
    <property type="project" value="UniProtKB"/>
</dbReference>
<dbReference type="GO" id="GO:0005777">
    <property type="term" value="C:peroxisome"/>
    <property type="evidence" value="ECO:0000250"/>
    <property type="project" value="UniProtKB"/>
</dbReference>
<dbReference type="GO" id="GO:0048786">
    <property type="term" value="C:presynaptic active zone"/>
    <property type="evidence" value="ECO:0000250"/>
    <property type="project" value="UniProtKB"/>
</dbReference>
<dbReference type="GO" id="GO:0003884">
    <property type="term" value="F:D-amino-acid oxidase activity"/>
    <property type="evidence" value="ECO:0000314"/>
    <property type="project" value="UniProtKB"/>
</dbReference>
<dbReference type="GO" id="GO:0071949">
    <property type="term" value="F:FAD binding"/>
    <property type="evidence" value="ECO:0007669"/>
    <property type="project" value="InterPro"/>
</dbReference>
<dbReference type="GO" id="GO:0043799">
    <property type="term" value="F:glycine oxidase activity"/>
    <property type="evidence" value="ECO:0007669"/>
    <property type="project" value="RHEA"/>
</dbReference>
<dbReference type="GO" id="GO:0055130">
    <property type="term" value="P:D-alanine catabolic process"/>
    <property type="evidence" value="ECO:0000318"/>
    <property type="project" value="GO_Central"/>
</dbReference>
<dbReference type="GO" id="GO:0019478">
    <property type="term" value="P:D-amino acid catabolic process"/>
    <property type="evidence" value="ECO:0000314"/>
    <property type="project" value="UniProtKB"/>
</dbReference>
<dbReference type="GO" id="GO:0036088">
    <property type="term" value="P:D-serine catabolic process"/>
    <property type="evidence" value="ECO:0000318"/>
    <property type="project" value="GO_Central"/>
</dbReference>
<dbReference type="GO" id="GO:0007586">
    <property type="term" value="P:digestion"/>
    <property type="evidence" value="ECO:0000250"/>
    <property type="project" value="UniProtKB"/>
</dbReference>
<dbReference type="GO" id="GO:0042416">
    <property type="term" value="P:dopamine biosynthetic process"/>
    <property type="evidence" value="ECO:0000250"/>
    <property type="project" value="UniProtKB"/>
</dbReference>
<dbReference type="GO" id="GO:0070945">
    <property type="term" value="P:neutrophil-mediated killing of gram-negative bacterium"/>
    <property type="evidence" value="ECO:0000314"/>
    <property type="project" value="UniProtKB"/>
</dbReference>
<dbReference type="GO" id="GO:0006562">
    <property type="term" value="P:proline catabolic process"/>
    <property type="evidence" value="ECO:0000318"/>
    <property type="project" value="GO_Central"/>
</dbReference>
<dbReference type="FunFam" id="3.40.50.720:FF:000641">
    <property type="entry name" value="D-amino acid oxidase"/>
    <property type="match status" value="1"/>
</dbReference>
<dbReference type="FunFam" id="3.30.9.10:FF:000004">
    <property type="entry name" value="D-amino-acid oxidase"/>
    <property type="match status" value="1"/>
</dbReference>
<dbReference type="Gene3D" id="3.30.9.10">
    <property type="entry name" value="D-Amino Acid Oxidase, subunit A, domain 2"/>
    <property type="match status" value="1"/>
</dbReference>
<dbReference type="Gene3D" id="3.40.50.720">
    <property type="entry name" value="NAD(P)-binding Rossmann-like Domain"/>
    <property type="match status" value="1"/>
</dbReference>
<dbReference type="InterPro" id="IPR006181">
    <property type="entry name" value="D-amino_acid_oxidase_CS"/>
</dbReference>
<dbReference type="InterPro" id="IPR023209">
    <property type="entry name" value="DAO"/>
</dbReference>
<dbReference type="InterPro" id="IPR006076">
    <property type="entry name" value="FAD-dep_OxRdtase"/>
</dbReference>
<dbReference type="PANTHER" id="PTHR11530">
    <property type="entry name" value="D-AMINO ACID OXIDASE"/>
    <property type="match status" value="1"/>
</dbReference>
<dbReference type="PANTHER" id="PTHR11530:SF15">
    <property type="entry name" value="D-AMINO-ACID OXIDASE"/>
    <property type="match status" value="1"/>
</dbReference>
<dbReference type="Pfam" id="PF01266">
    <property type="entry name" value="DAO"/>
    <property type="match status" value="1"/>
</dbReference>
<dbReference type="PIRSF" id="PIRSF000189">
    <property type="entry name" value="D-aa_oxidase"/>
    <property type="match status" value="1"/>
</dbReference>
<dbReference type="SUPFAM" id="SSF54373">
    <property type="entry name" value="FAD-linked reductases, C-terminal domain"/>
    <property type="match status" value="1"/>
</dbReference>
<dbReference type="SUPFAM" id="SSF51971">
    <property type="entry name" value="Nucleotide-binding domain"/>
    <property type="match status" value="1"/>
</dbReference>
<dbReference type="PROSITE" id="PS00677">
    <property type="entry name" value="DAO"/>
    <property type="match status" value="1"/>
</dbReference>
<sequence length="347" mass="39336">MRVVVIGAGVIGLSTALCIHERYHSVLQPLDVKVYADRFTPFTTTDVAAGLWQPYTSEPSNPQEANWNQQTFNYLLSHIGSPNAANMGLTPVSGYNLFREAVPDPYWKDMVLGFRKLTPRELDMFPDYRYGWFNTSLILEGRKYLQWLTERLTERGVKFFLRKVESFEEVARGGADVIINCTGVWAGVLQPDPLLQPGRGQIIKVDAPWLKNFIITHDLERGIYNSPYIIPGLQAVTLGGTFQVGNWNEINNIQDHNTIWEGCCRLEPTLKDAKIVGEYTGFRPVRPQVRLEREQLRFGSSNTEVIHNYGHGGYGLTIHWGCALEVAKLFGKVLEERNLLTMPPSHL</sequence>
<reference key="1">
    <citation type="journal article" date="1982" name="J. Biol. Chem.">
        <title>The primary structure of D-amino acid oxidase from pig kidney. II. Isolation and sequence of overlap peptides and the complete sequence.</title>
        <authorList>
            <person name="Ronchi S."/>
            <person name="Minchiotti L."/>
            <person name="Galliano M."/>
            <person name="Curti B."/>
            <person name="Swenson R.P."/>
            <person name="Williams C.H. Jr."/>
            <person name="Massey V."/>
        </authorList>
    </citation>
    <scope>PROTEIN SEQUENCE</scope>
    <source>
        <tissue>Kidney</tissue>
    </source>
</reference>
<reference key="2">
    <citation type="journal article" date="1987" name="Biochemistry">
        <title>Molecular cloning and sequence analysis of cDNAs encoding porcine kidney D-amino acid oxidase.</title>
        <authorList>
            <person name="Fukui K."/>
            <person name="Watanabe F."/>
            <person name="Shibata T."/>
            <person name="Miyake Y."/>
        </authorList>
    </citation>
    <scope>NUCLEOTIDE SEQUENCE [MRNA]</scope>
    <source>
        <tissue>Kidney</tissue>
    </source>
</reference>
<reference key="3">
    <citation type="journal article" date="1987" name="Gene">
        <title>Porcine D-amino acid oxidase: determination of the mRNA nucleotide sequence by the characterization of genomic and cDNA clones.</title>
        <authorList>
            <person name="Jacobs P."/>
            <person name="Brockly F."/>
            <person name="Massaer M."/>
            <person name="Loriau R."/>
            <person name="Guillaume J.P."/>
            <person name="Ciccarelli E."/>
            <person name="Heinderyckx M."/>
            <person name="Cravador A."/>
            <person name="Biemans R."/>
            <person name="van Elsen A."/>
            <person name="Herzog A."/>
            <person name="Bollen A."/>
        </authorList>
    </citation>
    <scope>NUCLEOTIDE SEQUENCE [GENOMIC DNA / MRNA]</scope>
</reference>
<reference key="4">
    <citation type="journal article" date="1988" name="Biochem. J.">
        <title>Structural interpretation of the binding of 9-azidoacridine to D-amino acid oxidase.</title>
        <authorList>
            <person name="Nicholson B.H."/>
            <person name="Batra S.P."/>
        </authorList>
    </citation>
    <scope>PROTEIN SEQUENCE</scope>
    <source>
        <tissue>Kidney</tissue>
    </source>
</reference>
<reference evidence="31" key="5">
    <citation type="submission" date="2009-11" db="EMBL/GenBank/DDBJ databases">
        <authorList>
            <consortium name="Porcine genome sequencing project"/>
        </authorList>
    </citation>
    <scope>NUCLEOTIDE SEQUENCE [LARGE SCALE GENOMIC DNA]</scope>
    <source>
        <strain evidence="31">Duroc</strain>
    </source>
</reference>
<reference key="6">
    <citation type="journal article" date="1989" name="Biochem. Biophys. Res. Commun.">
        <title>Expression of normal and abnormal porcine kidney D-amino acid oxidase in Escherichia coli: purification and characterization of the enzymes.</title>
        <authorList>
            <person name="Watanabe F."/>
            <person name="Fukui K."/>
            <person name="Momoi K."/>
            <person name="Miyake Y."/>
        </authorList>
    </citation>
    <scope>NUCLEOTIDE SEQUENCE OF 1-14</scope>
</reference>
<reference key="7">
    <citation type="journal article" date="1982" name="J. Biol. Chem.">
        <title>Chemical modification of D-amino acid oxidase. Amino acid sequence of the tryptic peptides containing tyrosine and lysine residues modified by fluorodinitrobenzene.</title>
        <authorList>
            <person name="Swenson R.P."/>
            <person name="Williams C.H. Jr."/>
            <person name="Massey V."/>
        </authorList>
    </citation>
    <scope>CATALYTIC ACTIVITY</scope>
    <scope>COFACTOR</scope>
    <scope>INHIBITION BY CHEMICAL MODIFICATION</scope>
</reference>
<reference key="8">
    <citation type="journal article" date="1983" name="J. Biol. Chem.">
        <title>Identification of the histidine residue in D-amino acid oxidase that is covalently modified during inactivation by 5-dimethylaminonaphthalene-1-sulfonyl chloride.</title>
        <authorList>
            <person name="Swenson R.P."/>
            <person name="Williams C.H. Jr."/>
            <person name="Massey V."/>
        </authorList>
    </citation>
    <scope>CATALYTIC ACTIVITY</scope>
    <scope>INHIBITION BY CHEMICAL MODIFICATION</scope>
</reference>
<reference key="9">
    <citation type="journal article" date="1988" name="Biochemistry">
        <title>In vivo and in vitro expression of porcine D-amino acid oxidase: in vitro system for the synthesis of a functional enzyme.</title>
        <authorList>
            <person name="Fukui K."/>
            <person name="Momoi K."/>
            <person name="Watanabe F."/>
            <person name="Miyake Y."/>
        </authorList>
    </citation>
    <scope>FUNCTION</scope>
    <scope>CATALYTIC ACTIVITY</scope>
    <scope>ACTIVITY REGULATION</scope>
    <scope>BIOPHYSICOCHEMICAL PROPERTIES</scope>
    <scope>TISSUE SPECIFICITY</scope>
</reference>
<reference key="10">
    <citation type="journal article" date="1988" name="FEBS Lett.">
        <title>Effect of site-specific mutagenesis of tyrosine-55, methionine-110 and histidine-217 in porcine kidney D-amino acid oxidase on its catalytic function.</title>
        <authorList>
            <person name="Watanabe F."/>
            <person name="Fukui K."/>
            <person name="Momoi K."/>
            <person name="Miyake Y."/>
        </authorList>
    </citation>
    <scope>MUTAGENESIS OF TYR-55; MET-110 AND HIS-217</scope>
</reference>
<reference key="11">
    <citation type="journal article" date="1991" name="J. Biochem.">
        <title>Studies on Phe-228 and Leu-307 recombinant mutants of porcine kidney D-amino acid oxidase: expression, purification, and characterization.</title>
        <authorList>
            <person name="Miyano M."/>
            <person name="Fukui K."/>
            <person name="Watanabe F."/>
            <person name="Takahashi S."/>
            <person name="Tada M."/>
            <person name="Kanashiro M."/>
            <person name="Miyake Y."/>
        </authorList>
    </citation>
    <scope>CATALYTIC ACTIVITY</scope>
    <scope>MUTAGENESIS OF TYR-228 AND HIS-307</scope>
</reference>
<reference key="12">
    <citation type="journal article" date="2004" name="Biotechnol. Prog.">
        <title>Catalytic properties of D-amino acid oxidase in cephalosporin C bioconversion: a comparison between proteins from different sources.</title>
        <authorList>
            <person name="Pollegioni L."/>
            <person name="Caldinelli L."/>
            <person name="Molla G."/>
            <person name="Sacchi S."/>
            <person name="Pilone M.S."/>
        </authorList>
    </citation>
    <scope>CATALYTIC ACTIVITY</scope>
    <scope>ACTIVITY REGULATION</scope>
    <scope>BIOPHYSICOCHEMICAL PROPERTIES</scope>
</reference>
<reference key="13">
    <citation type="journal article" date="2006" name="J. Biochem.">
        <title>Engineering the substrate specificity of porcine kidney D-amino acid oxidase by mutagenesis of the 'active-site lid'.</title>
        <authorList>
            <person name="Setoyama C."/>
            <person name="Nishina Y."/>
            <person name="Mizutani H."/>
            <person name="Miyahara I."/>
            <person name="Hirotsu K."/>
            <person name="Kamiya N."/>
            <person name="Shiga K."/>
            <person name="Miura R."/>
        </authorList>
    </citation>
    <scope>FUNCTION</scope>
    <scope>CATALYTIC ACTIVITY</scope>
    <scope>BIOPHYSICOCHEMICAL PROPERTIES</scope>
    <scope>MUTAGENESIS OF 215-ILE--ASN-225; 220-GLU--TYR-224; 221-ARG--TYR-224; 222-GLY--TYR-224; 223-ILE-TYR-224 AND TYR-224</scope>
</reference>
<reference key="14">
    <citation type="journal article" date="2007" name="Amino Acids">
        <title>Molecular cloning of a cDNA encoding mouse D-aspartate oxidase and functional characterization of its recombinant proteins by site-directed mutagenesis.</title>
        <authorList>
            <person name="Katane M."/>
            <person name="Furuchi T."/>
            <person name="Sekine M."/>
            <person name="Homma H."/>
        </authorList>
    </citation>
    <scope>FUNCTION</scope>
    <scope>CATALYTIC ACTIVITY</scope>
    <scope>ACTIVITY REGULATION</scope>
</reference>
<reference key="15">
    <citation type="journal article" date="2008" name="J. Med. Chem.">
        <title>Synthesis and biological evaluation of D-amino acid oxidase inhibitors.</title>
        <authorList>
            <person name="Ferraris D."/>
            <person name="Duvall B."/>
            <person name="Ko Y.S."/>
            <person name="Thomas A.G."/>
            <person name="Rojas C."/>
            <person name="Majer P."/>
            <person name="Hashimoto K."/>
            <person name="Tsukamoto T."/>
        </authorList>
    </citation>
    <scope>ACTIVITY REGULATION</scope>
</reference>
<reference key="16">
    <citation type="journal article" date="2010" name="Biochimie">
        <title>Thiolactomycin inhibits D-aspartate oxidase: a novel approach to probing the active site environment.</title>
        <authorList>
            <person name="Katane M."/>
            <person name="Saitoh Y."/>
            <person name="Hanai T."/>
            <person name="Sekine M."/>
            <person name="Furuchi T."/>
            <person name="Koyama N."/>
            <person name="Nakagome I."/>
            <person name="Tomoda H."/>
            <person name="Hirono S."/>
            <person name="Homma H."/>
        </authorList>
    </citation>
    <scope>FUNCTION</scope>
    <scope>CATALYTIC ACTIVITY</scope>
    <scope>COFACTOR</scope>
    <scope>ACTIVITY REGULATION</scope>
</reference>
<reference key="17">
    <citation type="journal article" date="2012" name="Infect. Immun.">
        <title>Protective role of D-amino acid oxidase against Staphylococcus aureus infection.</title>
        <authorList>
            <person name="Nakamura H."/>
            <person name="Fang J."/>
            <person name="Maeda H."/>
        </authorList>
    </citation>
    <scope>FUNCTION</scope>
</reference>
<reference key="18">
    <citation type="journal article" date="2014" name="Appl. Biochem. Biotechnol.">
        <title>A mathematical model of oxidative deamination of amino acid catalyzed by two D-amino acid oxidases and influence of aeration on enzyme stability.</title>
        <authorList>
            <person name="Findrik Z."/>
            <person name="Valentovic I."/>
            <person name="Vasic-Racki D."/>
        </authorList>
    </citation>
    <scope>FUNCTION</scope>
    <scope>CATALYTIC ACTIVITY</scope>
    <scope>BIOPHYSICOCHEMICAL PROPERTIES</scope>
</reference>
<reference key="19">
    <citation type="journal article" date="2014" name="MBio">
        <title>Salmonella evades D-amino acid oxidase to promote infection in neutrophils.</title>
        <authorList>
            <person name="Tuinema B.R."/>
            <person name="Reid-Yu S.A."/>
            <person name="Coombes B.K."/>
        </authorList>
    </citation>
    <scope>FUNCTION</scope>
</reference>
<reference key="20">
    <citation type="journal article" date="2016" name="Nat. Microbiol.">
        <title>Interplay between microbial d-amino acids and host d-amino acid oxidase modifies murine mucosal defence and gut microbiota.</title>
        <authorList>
            <person name="Sasabe J."/>
            <person name="Miyoshi Y."/>
            <person name="Rakoff-Nahoum S."/>
            <person name="Zhang T."/>
            <person name="Mita M."/>
            <person name="Davis B.M."/>
            <person name="Hamase K."/>
            <person name="Waldor M.K."/>
        </authorList>
    </citation>
    <scope>FUNCTION</scope>
</reference>
<reference key="21">
    <citation type="journal article" date="2017" name="Sci. Rep.">
        <title>PH-Dependent Enantioselectivity of D-amino Acid Oxidase in Aqueous Solution.</title>
        <authorList>
            <person name="Liu Q."/>
            <person name="Chen L."/>
            <person name="Zhang Z."/>
            <person name="Du B."/>
            <person name="Xiao Y."/>
            <person name="Yang K."/>
            <person name="Gong L."/>
            <person name="Wu L."/>
            <person name="Li X."/>
            <person name="He Y."/>
        </authorList>
    </citation>
    <scope>FUNCTION</scope>
    <scope>CATALYTIC ACTIVITY</scope>
    <scope>BIOPHYSICOCHEMICAL PROPERTIES</scope>
</reference>
<reference key="22">
    <citation type="journal article" date="2021" name="J. Biochem.">
        <title>Dynamics of D-amino acid oxidase in kidney epithelial cells under amino acid starvation.</title>
        <authorList>
            <person name="Sogabe H."/>
            <person name="Shishido Y."/>
            <person name="Miyazaki H."/>
            <person name="Kim S.H."/>
            <person name="Rachadech W."/>
            <person name="Fukui K."/>
        </authorList>
    </citation>
    <scope>SUBCELLULAR LOCATION</scope>
    <scope>INDUCTION</scope>
</reference>
<reference evidence="37" key="23">
    <citation type="journal article" date="1996" name="J. Biochem.">
        <title>Three-dimensional structure of porcine kidney D-amino acid oxidase at 3.0-A resolution.</title>
        <authorList>
            <person name="Mizutani H."/>
            <person name="Miyahara I."/>
            <person name="Hirotsu K."/>
            <person name="Nishima Y."/>
            <person name="Shiga K."/>
            <person name="Setoyama C."/>
            <person name="Miura R."/>
        </authorList>
    </citation>
    <scope>X-RAY CRYSTALLOGRAPHY (3.0 ANGSTROMS)</scope>
</reference>
<reference evidence="36" key="24">
    <citation type="journal article" date="1996" name="Proc. Natl. Acad. Sci. U.S.A.">
        <title>Crystal structure of D-amino acid oxidase: a case of active site mirror-image convergent evolution with flavocytochrome b2.</title>
        <authorList>
            <person name="Mattevi A."/>
            <person name="Vanoni M.A."/>
            <person name="Todone F."/>
            <person name="Rizzi M."/>
            <person name="Teplyakov A."/>
            <person name="Coda A."/>
            <person name="Bolognesi M."/>
            <person name="Curti B."/>
        </authorList>
    </citation>
    <scope>X-RAY CRYSTALLOGRAPHY (2.6 ANGSTROMS) IN COMPLEX WITH FAD AND BENZOATE</scope>
    <scope>COFACTOR</scope>
    <scope>SUBUNIT</scope>
</reference>
<reference evidence="33 34" key="25">
    <citation type="journal article" date="1997" name="Biochemistry">
        <title>Active site plasticity in D-amino acid oxidase: a crystallographic analysis.</title>
        <authorList>
            <person name="Todone F."/>
            <person name="Vanoni M.A."/>
            <person name="Mozzarelli A."/>
            <person name="Bolognesi M."/>
            <person name="Coda A."/>
            <person name="Curti B."/>
            <person name="Mattevi A."/>
        </authorList>
    </citation>
    <scope>X-RAY CRYSTALLOGRAPHY (3.1 ANGSTROMS) IN COMPLEX WITH FAD; D-ARGININE; IMINO-TRYPTOPHAN AND 3-METHYL-2-OXOBUTYRIC ACID</scope>
    <scope>COFACTOR</scope>
    <scope>SUBUNIT</scope>
    <scope>ENZYME MECHANISM</scope>
</reference>
<reference evidence="32" key="26">
    <citation type="journal article" date="1997" name="J. Biochem.">
        <title>Structural and mechanistic studies on D-amino acid oxidase x substrate complex: implications of the crystal structure of enzyme x substrate analog complex.</title>
        <authorList>
            <person name="Miura R."/>
            <person name="Setoyama C."/>
            <person name="Nishina Y."/>
            <person name="Shiga K."/>
            <person name="Mizutani H."/>
            <person name="Miyahara I."/>
            <person name="Hirotsu K."/>
        </authorList>
    </citation>
    <scope>X-RAY CRYSTALLOGRAPHY (2.50 ANGSTROMS) OF 1-340 IN COMPLEX WITH FAD AND ANTHRANILATE</scope>
    <scope>COFACTOR</scope>
    <scope>SUBUNIT</scope>
</reference>
<reference evidence="35" key="27">
    <citation type="journal article" date="2000" name="J. Biochem.">
        <title>Three-dimensional structure of the purple intermediate of porcine kidney D-amino acid oxidase. Optimization of the oxidative half-reaction through alignment of the product with reduced flavin.</title>
        <authorList>
            <person name="Mizutani H."/>
            <person name="Miyahara I."/>
            <person name="Hirotsu K."/>
            <person name="Nishina Y."/>
            <person name="Shiga K."/>
            <person name="Setoyama C."/>
            <person name="Miura R."/>
        </authorList>
    </citation>
    <scope>X-RAY CRYSTALLOGRAPHY (2.50 ANGSTROMS) OF 1-340 IN COMPLEX WITH FAD AND D-PROLINE</scope>
    <scope>FUNCTION</scope>
    <scope>CATALYTIC ACTIVITY</scope>
    <scope>COFACTOR</scope>
</reference>
<reference evidence="38" key="28">
    <citation type="journal article" date="2014" name="Angew. Chem. Int. Ed.">
        <title>Tailoring D-amino acid oxidase from the pig kidney to R-stereoselective amine oxidase and its use in the deracemization of alpha-methylbenzylamine.</title>
        <authorList>
            <person name="Yasukawa K."/>
            <person name="Nakano S."/>
            <person name="Asano Y."/>
        </authorList>
    </citation>
    <scope>X-RAY CRYSTALLOGRAPHY (1.88 ANGSTROMS) OF MUTANT LEU-228 AND GLY-283 IN COMPLEX WITH FAD AND (1R)-1-PHENYLETHANAMINE</scope>
    <scope>FUNCTION</scope>
    <scope>CATALYTIC ACTIVITY</scope>
    <scope>COFACTOR</scope>
    <scope>MUTAGENESIS OF TYR-228 AND ARG-283</scope>
</reference>
<reference evidence="39 40 41 42" key="29">
    <citation type="journal article" date="2016" name="J. Phys. Chem. B">
        <title>Origin of Stereoselectivity and Substrate/Ligand Recognition in an FAD-Dependent R-Selective Amine Oxidase.</title>
        <authorList>
            <person name="Nakano S."/>
            <person name="Yasukawa K."/>
            <person name="Tokiwa T."/>
            <person name="Ishikawa T."/>
            <person name="Ishitsubo E."/>
            <person name="Matsuo N."/>
            <person name="Ito S."/>
            <person name="Tokiwa H."/>
            <person name="Asano Y."/>
        </authorList>
    </citation>
    <scope>X-RAY CRYSTALLOGRAPHY (2.20 ANGSTROMS) OF MUTANT LEU-228 AND GLY-283 IN COMPLEX WITH FAD AND (1R)-1-PHENYLETHANAMINE</scope>
    <scope>CATALYTIC ACTIVITY</scope>
    <scope>MUTAGENESIS OF TYR-228 AND ARG-283</scope>
</reference>
<reference evidence="43 44" key="30">
    <citation type="journal article" date="2018" name="ChemCatChem">
        <title>Expansion of the Substrate Specificity of Porcine Kidney D-Amino Acid Oxidase for S-Stereoselective Oxidation of 4-Cl-Benzhydrylamine.</title>
        <authorList>
            <person name="Yasukawa K."/>
            <person name="Motojima F."/>
            <person name="Ono A."/>
            <person name="Asano Y."/>
        </authorList>
    </citation>
    <scope>X-RAY CRYSTALLOGRAPHY (3.00 ANGSTROMS) OF MUTANT ALA-230 AND GLY-283 IN COMPLEX WITH FAD AND 2-METHYLPENTANE-2,4-DIOL</scope>
    <scope>FUNCTION</scope>
    <scope>CATALYTIC ACTIVITY</scope>
    <scope>MUTAGENESIS OF TYR-228; ILE-230 AND ARG-283</scope>
</reference>